<feature type="chain" id="PRO_0000176989" description="Transcription elongation factor GreA">
    <location>
        <begin position="1"/>
        <end position="157"/>
    </location>
</feature>
<feature type="coiled-coil region" evidence="1">
    <location>
        <begin position="14"/>
        <end position="37"/>
    </location>
</feature>
<evidence type="ECO:0000255" key="1">
    <source>
        <dbReference type="HAMAP-Rule" id="MF_00105"/>
    </source>
</evidence>
<evidence type="ECO:0000305" key="2"/>
<proteinExistence type="inferred from homology"/>
<organism>
    <name type="scientific">Vibrio cholerae serotype O1 (strain ATCC 39315 / El Tor Inaba N16961)</name>
    <dbReference type="NCBI Taxonomy" id="243277"/>
    <lineage>
        <taxon>Bacteria</taxon>
        <taxon>Pseudomonadati</taxon>
        <taxon>Pseudomonadota</taxon>
        <taxon>Gammaproteobacteria</taxon>
        <taxon>Vibrionales</taxon>
        <taxon>Vibrionaceae</taxon>
        <taxon>Vibrio</taxon>
    </lineage>
</organism>
<name>GREA_VIBCH</name>
<comment type="function">
    <text evidence="1">Necessary for efficient RNA polymerase transcription elongation past template-encoded arresting sites. The arresting sites in DNA have the property of trapping a certain fraction of elongating RNA polymerases that pass through, resulting in locked ternary complexes. Cleavage of the nascent transcript by cleavage factors such as GreA or GreB allows the resumption of elongation from the new 3'terminus. GreA releases sequences of 2 to 3 nucleotides.</text>
</comment>
<comment type="similarity">
    <text evidence="1">Belongs to the GreA/GreB family.</text>
</comment>
<comment type="sequence caution" evidence="2">
    <conflict type="erroneous initiation">
        <sequence resource="EMBL-CDS" id="AAF93800"/>
    </conflict>
</comment>
<protein>
    <recommendedName>
        <fullName evidence="1">Transcription elongation factor GreA</fullName>
    </recommendedName>
    <alternativeName>
        <fullName evidence="1">Transcript cleavage factor GreA</fullName>
    </alternativeName>
</protein>
<reference key="1">
    <citation type="journal article" date="2000" name="Nature">
        <title>DNA sequence of both chromosomes of the cholera pathogen Vibrio cholerae.</title>
        <authorList>
            <person name="Heidelberg J.F."/>
            <person name="Eisen J.A."/>
            <person name="Nelson W.C."/>
            <person name="Clayton R.A."/>
            <person name="Gwinn M.L."/>
            <person name="Dodson R.J."/>
            <person name="Haft D.H."/>
            <person name="Hickey E.K."/>
            <person name="Peterson J.D."/>
            <person name="Umayam L.A."/>
            <person name="Gill S.R."/>
            <person name="Nelson K.E."/>
            <person name="Read T.D."/>
            <person name="Tettelin H."/>
            <person name="Richardson D.L."/>
            <person name="Ermolaeva M.D."/>
            <person name="Vamathevan J.J."/>
            <person name="Bass S."/>
            <person name="Qin H."/>
            <person name="Dragoi I."/>
            <person name="Sellers P."/>
            <person name="McDonald L.A."/>
            <person name="Utterback T.R."/>
            <person name="Fleischmann R.D."/>
            <person name="Nierman W.C."/>
            <person name="White O."/>
            <person name="Salzberg S.L."/>
            <person name="Smith H.O."/>
            <person name="Colwell R.R."/>
            <person name="Mekalanos J.J."/>
            <person name="Venter J.C."/>
            <person name="Fraser C.M."/>
        </authorList>
    </citation>
    <scope>NUCLEOTIDE SEQUENCE [LARGE SCALE GENOMIC DNA]</scope>
    <source>
        <strain>ATCC 39315 / El Tor Inaba N16961</strain>
    </source>
</reference>
<sequence length="157" mass="17452">MEKVPMTARGEKLLREELDRLLKLRPKITEAIAEARELGDLKENAEYHAAREEQGICEAQIRDIEYKLSVAQVIDVTKMENSGKVIFGATVTVIDVNSDEEKTYQIVGDDEADIKSGRISVNSPIARGLIGKFEGDEVSIATPGGNKVFEIDRVEYL</sequence>
<dbReference type="EMBL" id="AE003852">
    <property type="protein sequence ID" value="AAF93800.1"/>
    <property type="status" value="ALT_INIT"/>
    <property type="molecule type" value="Genomic_DNA"/>
</dbReference>
<dbReference type="PIR" id="B82299">
    <property type="entry name" value="B82299"/>
</dbReference>
<dbReference type="RefSeq" id="NP_230283.1">
    <property type="nucleotide sequence ID" value="NC_002505.1"/>
</dbReference>
<dbReference type="RefSeq" id="WP_001883448.1">
    <property type="nucleotide sequence ID" value="NZ_LT906614.1"/>
</dbReference>
<dbReference type="SMR" id="Q9KU89"/>
<dbReference type="STRING" id="243277.VC_0634"/>
<dbReference type="DNASU" id="2615422"/>
<dbReference type="EnsemblBacteria" id="AAF93800">
    <property type="protein sequence ID" value="AAF93800"/>
    <property type="gene ID" value="VC_0634"/>
</dbReference>
<dbReference type="GeneID" id="88783996"/>
<dbReference type="KEGG" id="vch:VC_0634"/>
<dbReference type="PATRIC" id="fig|243277.26.peg.604"/>
<dbReference type="eggNOG" id="COG0782">
    <property type="taxonomic scope" value="Bacteria"/>
</dbReference>
<dbReference type="HOGENOM" id="CLU_101379_2_0_6"/>
<dbReference type="Proteomes" id="UP000000584">
    <property type="component" value="Chromosome 1"/>
</dbReference>
<dbReference type="GO" id="GO:0003677">
    <property type="term" value="F:DNA binding"/>
    <property type="evidence" value="ECO:0007669"/>
    <property type="project" value="UniProtKB-UniRule"/>
</dbReference>
<dbReference type="GO" id="GO:0070063">
    <property type="term" value="F:RNA polymerase binding"/>
    <property type="evidence" value="ECO:0007669"/>
    <property type="project" value="InterPro"/>
</dbReference>
<dbReference type="GO" id="GO:0006354">
    <property type="term" value="P:DNA-templated transcription elongation"/>
    <property type="evidence" value="ECO:0000318"/>
    <property type="project" value="GO_Central"/>
</dbReference>
<dbReference type="GO" id="GO:0032784">
    <property type="term" value="P:regulation of DNA-templated transcription elongation"/>
    <property type="evidence" value="ECO:0007669"/>
    <property type="project" value="UniProtKB-UniRule"/>
</dbReference>
<dbReference type="FunFam" id="1.10.287.180:FF:000001">
    <property type="entry name" value="Transcription elongation factor GreA"/>
    <property type="match status" value="1"/>
</dbReference>
<dbReference type="FunFam" id="3.10.50.30:FF:000001">
    <property type="entry name" value="Transcription elongation factor GreA"/>
    <property type="match status" value="1"/>
</dbReference>
<dbReference type="Gene3D" id="3.10.50.30">
    <property type="entry name" value="Transcription elongation factor, GreA/GreB, C-terminal domain"/>
    <property type="match status" value="1"/>
</dbReference>
<dbReference type="Gene3D" id="1.10.287.180">
    <property type="entry name" value="Transcription elongation factor, GreA/GreB, N-terminal domain"/>
    <property type="match status" value="1"/>
</dbReference>
<dbReference type="HAMAP" id="MF_00105">
    <property type="entry name" value="GreA_GreB"/>
    <property type="match status" value="1"/>
</dbReference>
<dbReference type="InterPro" id="IPR036953">
    <property type="entry name" value="GreA/GreB_C_sf"/>
</dbReference>
<dbReference type="InterPro" id="IPR018151">
    <property type="entry name" value="TF_GreA/GreB_CS"/>
</dbReference>
<dbReference type="InterPro" id="IPR006359">
    <property type="entry name" value="Tscrpt_elong_fac_GreA"/>
</dbReference>
<dbReference type="InterPro" id="IPR028624">
    <property type="entry name" value="Tscrpt_elong_fac_GreA/B"/>
</dbReference>
<dbReference type="InterPro" id="IPR001437">
    <property type="entry name" value="Tscrpt_elong_fac_GreA/B_C"/>
</dbReference>
<dbReference type="InterPro" id="IPR023459">
    <property type="entry name" value="Tscrpt_elong_fac_GreA/B_fam"/>
</dbReference>
<dbReference type="InterPro" id="IPR022691">
    <property type="entry name" value="Tscrpt_elong_fac_GreA/B_N"/>
</dbReference>
<dbReference type="InterPro" id="IPR036805">
    <property type="entry name" value="Tscrpt_elong_fac_GreA/B_N_sf"/>
</dbReference>
<dbReference type="NCBIfam" id="TIGR01462">
    <property type="entry name" value="greA"/>
    <property type="match status" value="1"/>
</dbReference>
<dbReference type="NCBIfam" id="NF001261">
    <property type="entry name" value="PRK00226.1-2"/>
    <property type="match status" value="1"/>
</dbReference>
<dbReference type="NCBIfam" id="NF001263">
    <property type="entry name" value="PRK00226.1-4"/>
    <property type="match status" value="1"/>
</dbReference>
<dbReference type="NCBIfam" id="NF001264">
    <property type="entry name" value="PRK00226.1-5"/>
    <property type="match status" value="1"/>
</dbReference>
<dbReference type="PANTHER" id="PTHR30437">
    <property type="entry name" value="TRANSCRIPTION ELONGATION FACTOR GREA"/>
    <property type="match status" value="1"/>
</dbReference>
<dbReference type="PANTHER" id="PTHR30437:SF4">
    <property type="entry name" value="TRANSCRIPTION ELONGATION FACTOR GREA"/>
    <property type="match status" value="1"/>
</dbReference>
<dbReference type="Pfam" id="PF01272">
    <property type="entry name" value="GreA_GreB"/>
    <property type="match status" value="1"/>
</dbReference>
<dbReference type="Pfam" id="PF03449">
    <property type="entry name" value="GreA_GreB_N"/>
    <property type="match status" value="1"/>
</dbReference>
<dbReference type="PIRSF" id="PIRSF006092">
    <property type="entry name" value="GreA_GreB"/>
    <property type="match status" value="1"/>
</dbReference>
<dbReference type="SUPFAM" id="SSF54534">
    <property type="entry name" value="FKBP-like"/>
    <property type="match status" value="1"/>
</dbReference>
<dbReference type="SUPFAM" id="SSF46557">
    <property type="entry name" value="GreA transcript cleavage protein, N-terminal domain"/>
    <property type="match status" value="1"/>
</dbReference>
<dbReference type="PROSITE" id="PS00829">
    <property type="entry name" value="GREAB_1"/>
    <property type="match status" value="1"/>
</dbReference>
<dbReference type="PROSITE" id="PS00830">
    <property type="entry name" value="GREAB_2"/>
    <property type="match status" value="1"/>
</dbReference>
<gene>
    <name evidence="1" type="primary">greA</name>
    <name type="ordered locus">VC_0634</name>
</gene>
<accession>Q9KU89</accession>
<keyword id="KW-0175">Coiled coil</keyword>
<keyword id="KW-0238">DNA-binding</keyword>
<keyword id="KW-1185">Reference proteome</keyword>
<keyword id="KW-0804">Transcription</keyword>
<keyword id="KW-0805">Transcription regulation</keyword>